<reference key="1">
    <citation type="journal article" date="2005" name="Proc. Natl. Acad. Sci. U.S.A.">
        <title>Comparison of the complete genome sequences of Pseudomonas syringae pv. syringae B728a and pv. tomato DC3000.</title>
        <authorList>
            <person name="Feil H."/>
            <person name="Feil W.S."/>
            <person name="Chain P."/>
            <person name="Larimer F."/>
            <person name="Dibartolo G."/>
            <person name="Copeland A."/>
            <person name="Lykidis A."/>
            <person name="Trong S."/>
            <person name="Nolan M."/>
            <person name="Goltsman E."/>
            <person name="Thiel J."/>
            <person name="Malfatti S."/>
            <person name="Loper J.E."/>
            <person name="Lapidus A."/>
            <person name="Detter J.C."/>
            <person name="Land M."/>
            <person name="Richardson P.M."/>
            <person name="Kyrpides N.C."/>
            <person name="Ivanova N."/>
            <person name="Lindow S.E."/>
        </authorList>
    </citation>
    <scope>NUCLEOTIDE SEQUENCE [LARGE SCALE GENOMIC DNA]</scope>
    <source>
        <strain>B728a</strain>
    </source>
</reference>
<name>UVRB_PSEU2</name>
<protein>
    <recommendedName>
        <fullName evidence="1">UvrABC system protein B</fullName>
        <shortName evidence="1">Protein UvrB</shortName>
    </recommendedName>
    <alternativeName>
        <fullName evidence="1">Excinuclease ABC subunit B</fullName>
    </alternativeName>
</protein>
<sequence length="671" mass="76357">MSEFQLVTRFEPAGDQPEAIRQLVEGIDAGLAHQTLLGVTGSGKTFSIANVISQIKRPTLVLAPNKTLAAQLYGEFKAFFPNNAVEYFVSYYDYYQPEAYVPSSDTFIEKDASINDHIEQMRLSATKALLERKDAIIVTTVSCIYGLGSPETYLRMVMHIDRGDKLDQRALLRRLADLQYTRNDMDFARATFRVRGDVIDIYPAESDLEAIRVELFDDEVESLSAFDPLTGEVIRKLPRFTFYPKSHYVTPRETLIEAMENIKVELQERLEYLRSQNKLVEAQRLEQRTRFDLEMMLELGYCNGIENYSRYLSGRPSGAPPPTLFDYLPPDALLVIDESHVSVPQVGAMYKGDRSRKETLVEYGFRLPSALDNRPMRFDEWEAISPQTIFVSATPGNYEAEHAGRIVEQVVRPTGLVDPQIEIRPALTQVDDLLSEIHKRAALEERVLVTTLTKRMSEDLTDYLSDHGVRVRYLHSDIDTVERVEIIRDLRLGTFDVLVGINLLREGLDMPEVSLVAILDADKEGFLRSDRSLIQTIGRAARNLNGRAILYADRITGSMERAIGETERRREKQIAFNLEHGITPKGVFKDVADIMEGATVPGSRSKKRKGMAKAAEENARYENELRSPSEINKRIRQLEEKMYQLARDLEFEAAAQMRDEIGKLRERLLAV</sequence>
<accession>Q4ZV05</accession>
<feature type="chain" id="PRO_0000227351" description="UvrABC system protein B">
    <location>
        <begin position="1"/>
        <end position="671"/>
    </location>
</feature>
<feature type="domain" description="Helicase ATP-binding" evidence="1">
    <location>
        <begin position="25"/>
        <end position="412"/>
    </location>
</feature>
<feature type="domain" description="Helicase C-terminal" evidence="1">
    <location>
        <begin position="429"/>
        <end position="582"/>
    </location>
</feature>
<feature type="domain" description="UVR" evidence="1">
    <location>
        <begin position="632"/>
        <end position="667"/>
    </location>
</feature>
<feature type="region of interest" description="Disordered" evidence="2">
    <location>
        <begin position="601"/>
        <end position="624"/>
    </location>
</feature>
<feature type="short sequence motif" description="Beta-hairpin">
    <location>
        <begin position="91"/>
        <end position="114"/>
    </location>
</feature>
<feature type="compositionally biased region" description="Basic and acidic residues" evidence="2">
    <location>
        <begin position="614"/>
        <end position="624"/>
    </location>
</feature>
<feature type="binding site" evidence="1">
    <location>
        <begin position="38"/>
        <end position="45"/>
    </location>
    <ligand>
        <name>ATP</name>
        <dbReference type="ChEBI" id="CHEBI:30616"/>
    </ligand>
</feature>
<keyword id="KW-0067">ATP-binding</keyword>
<keyword id="KW-0963">Cytoplasm</keyword>
<keyword id="KW-0227">DNA damage</keyword>
<keyword id="KW-0228">DNA excision</keyword>
<keyword id="KW-0234">DNA repair</keyword>
<keyword id="KW-0267">Excision nuclease</keyword>
<keyword id="KW-0547">Nucleotide-binding</keyword>
<keyword id="KW-0742">SOS response</keyword>
<comment type="function">
    <text evidence="1">The UvrABC repair system catalyzes the recognition and processing of DNA lesions. A damage recognition complex composed of 2 UvrA and 2 UvrB subunits scans DNA for abnormalities. Upon binding of the UvrA(2)B(2) complex to a putative damaged site, the DNA wraps around one UvrB monomer. DNA wrap is dependent on ATP binding by UvrB and probably causes local melting of the DNA helix, facilitating insertion of UvrB beta-hairpin between the DNA strands. Then UvrB probes one DNA strand for the presence of a lesion. If a lesion is found the UvrA subunits dissociate and the UvrB-DNA preincision complex is formed. This complex is subsequently bound by UvrC and the second UvrB is released. If no lesion is found, the DNA wraps around the other UvrB subunit that will check the other stand for damage.</text>
</comment>
<comment type="subunit">
    <text evidence="1">Forms a heterotetramer with UvrA during the search for lesions. Interacts with UvrC in an incision complex.</text>
</comment>
<comment type="subcellular location">
    <subcellularLocation>
        <location evidence="1">Cytoplasm</location>
    </subcellularLocation>
</comment>
<comment type="domain">
    <text evidence="1">The beta-hairpin motif is involved in DNA binding.</text>
</comment>
<comment type="similarity">
    <text evidence="1">Belongs to the UvrB family.</text>
</comment>
<evidence type="ECO:0000255" key="1">
    <source>
        <dbReference type="HAMAP-Rule" id="MF_00204"/>
    </source>
</evidence>
<evidence type="ECO:0000256" key="2">
    <source>
        <dbReference type="SAM" id="MobiDB-lite"/>
    </source>
</evidence>
<proteinExistence type="inferred from homology"/>
<organism>
    <name type="scientific">Pseudomonas syringae pv. syringae (strain B728a)</name>
    <dbReference type="NCBI Taxonomy" id="205918"/>
    <lineage>
        <taxon>Bacteria</taxon>
        <taxon>Pseudomonadati</taxon>
        <taxon>Pseudomonadota</taxon>
        <taxon>Gammaproteobacteria</taxon>
        <taxon>Pseudomonadales</taxon>
        <taxon>Pseudomonadaceae</taxon>
        <taxon>Pseudomonas</taxon>
        <taxon>Pseudomonas syringae</taxon>
    </lineage>
</organism>
<dbReference type="EMBL" id="CP000075">
    <property type="protein sequence ID" value="AAY37017.1"/>
    <property type="molecule type" value="Genomic_DNA"/>
</dbReference>
<dbReference type="RefSeq" id="WP_003345654.1">
    <property type="nucleotide sequence ID" value="NC_007005.1"/>
</dbReference>
<dbReference type="RefSeq" id="YP_235055.1">
    <property type="nucleotide sequence ID" value="NC_007005.1"/>
</dbReference>
<dbReference type="SMR" id="Q4ZV05"/>
<dbReference type="STRING" id="205918.Psyr_1974"/>
<dbReference type="KEGG" id="psb:Psyr_1974"/>
<dbReference type="PATRIC" id="fig|205918.7.peg.2016"/>
<dbReference type="eggNOG" id="COG0556">
    <property type="taxonomic scope" value="Bacteria"/>
</dbReference>
<dbReference type="HOGENOM" id="CLU_009621_2_1_6"/>
<dbReference type="OrthoDB" id="9806651at2"/>
<dbReference type="Proteomes" id="UP000000426">
    <property type="component" value="Chromosome"/>
</dbReference>
<dbReference type="GO" id="GO:0005737">
    <property type="term" value="C:cytoplasm"/>
    <property type="evidence" value="ECO:0007669"/>
    <property type="project" value="UniProtKB-SubCell"/>
</dbReference>
<dbReference type="GO" id="GO:0009380">
    <property type="term" value="C:excinuclease repair complex"/>
    <property type="evidence" value="ECO:0007669"/>
    <property type="project" value="InterPro"/>
</dbReference>
<dbReference type="GO" id="GO:0005524">
    <property type="term" value="F:ATP binding"/>
    <property type="evidence" value="ECO:0007669"/>
    <property type="project" value="UniProtKB-UniRule"/>
</dbReference>
<dbReference type="GO" id="GO:0016887">
    <property type="term" value="F:ATP hydrolysis activity"/>
    <property type="evidence" value="ECO:0007669"/>
    <property type="project" value="InterPro"/>
</dbReference>
<dbReference type="GO" id="GO:0003677">
    <property type="term" value="F:DNA binding"/>
    <property type="evidence" value="ECO:0007669"/>
    <property type="project" value="UniProtKB-UniRule"/>
</dbReference>
<dbReference type="GO" id="GO:0009381">
    <property type="term" value="F:excinuclease ABC activity"/>
    <property type="evidence" value="ECO:0007669"/>
    <property type="project" value="UniProtKB-UniRule"/>
</dbReference>
<dbReference type="GO" id="GO:0006289">
    <property type="term" value="P:nucleotide-excision repair"/>
    <property type="evidence" value="ECO:0007669"/>
    <property type="project" value="UniProtKB-UniRule"/>
</dbReference>
<dbReference type="GO" id="GO:0009432">
    <property type="term" value="P:SOS response"/>
    <property type="evidence" value="ECO:0007669"/>
    <property type="project" value="UniProtKB-UniRule"/>
</dbReference>
<dbReference type="CDD" id="cd17916">
    <property type="entry name" value="DEXHc_UvrB"/>
    <property type="match status" value="1"/>
</dbReference>
<dbReference type="CDD" id="cd18790">
    <property type="entry name" value="SF2_C_UvrB"/>
    <property type="match status" value="1"/>
</dbReference>
<dbReference type="FunFam" id="3.40.50.300:FF:000257">
    <property type="entry name" value="UvrABC system protein B"/>
    <property type="match status" value="1"/>
</dbReference>
<dbReference type="FunFam" id="3.40.50.300:FF:000477">
    <property type="entry name" value="UvrABC system protein B"/>
    <property type="match status" value="1"/>
</dbReference>
<dbReference type="Gene3D" id="6.10.140.240">
    <property type="match status" value="1"/>
</dbReference>
<dbReference type="Gene3D" id="3.40.50.300">
    <property type="entry name" value="P-loop containing nucleotide triphosphate hydrolases"/>
    <property type="match status" value="3"/>
</dbReference>
<dbReference type="Gene3D" id="4.10.860.10">
    <property type="entry name" value="UVR domain"/>
    <property type="match status" value="1"/>
</dbReference>
<dbReference type="HAMAP" id="MF_00204">
    <property type="entry name" value="UvrB"/>
    <property type="match status" value="1"/>
</dbReference>
<dbReference type="InterPro" id="IPR006935">
    <property type="entry name" value="Helicase/UvrB_N"/>
</dbReference>
<dbReference type="InterPro" id="IPR014001">
    <property type="entry name" value="Helicase_ATP-bd"/>
</dbReference>
<dbReference type="InterPro" id="IPR001650">
    <property type="entry name" value="Helicase_C-like"/>
</dbReference>
<dbReference type="InterPro" id="IPR027417">
    <property type="entry name" value="P-loop_NTPase"/>
</dbReference>
<dbReference type="InterPro" id="IPR001943">
    <property type="entry name" value="UVR_dom"/>
</dbReference>
<dbReference type="InterPro" id="IPR036876">
    <property type="entry name" value="UVR_dom_sf"/>
</dbReference>
<dbReference type="InterPro" id="IPR004807">
    <property type="entry name" value="UvrB"/>
</dbReference>
<dbReference type="InterPro" id="IPR041471">
    <property type="entry name" value="UvrB_inter"/>
</dbReference>
<dbReference type="InterPro" id="IPR024759">
    <property type="entry name" value="UvrB_YAD/RRR_dom"/>
</dbReference>
<dbReference type="NCBIfam" id="NF003673">
    <property type="entry name" value="PRK05298.1"/>
    <property type="match status" value="1"/>
</dbReference>
<dbReference type="NCBIfam" id="TIGR00631">
    <property type="entry name" value="uvrb"/>
    <property type="match status" value="1"/>
</dbReference>
<dbReference type="PANTHER" id="PTHR24029">
    <property type="entry name" value="UVRABC SYSTEM PROTEIN B"/>
    <property type="match status" value="1"/>
</dbReference>
<dbReference type="PANTHER" id="PTHR24029:SF0">
    <property type="entry name" value="UVRABC SYSTEM PROTEIN B"/>
    <property type="match status" value="1"/>
</dbReference>
<dbReference type="Pfam" id="PF00271">
    <property type="entry name" value="Helicase_C"/>
    <property type="match status" value="1"/>
</dbReference>
<dbReference type="Pfam" id="PF04851">
    <property type="entry name" value="ResIII"/>
    <property type="match status" value="1"/>
</dbReference>
<dbReference type="Pfam" id="PF02151">
    <property type="entry name" value="UVR"/>
    <property type="match status" value="1"/>
</dbReference>
<dbReference type="Pfam" id="PF12344">
    <property type="entry name" value="UvrB"/>
    <property type="match status" value="1"/>
</dbReference>
<dbReference type="Pfam" id="PF17757">
    <property type="entry name" value="UvrB_inter"/>
    <property type="match status" value="1"/>
</dbReference>
<dbReference type="SMART" id="SM00487">
    <property type="entry name" value="DEXDc"/>
    <property type="match status" value="1"/>
</dbReference>
<dbReference type="SMART" id="SM00490">
    <property type="entry name" value="HELICc"/>
    <property type="match status" value="1"/>
</dbReference>
<dbReference type="SUPFAM" id="SSF46600">
    <property type="entry name" value="C-terminal UvrC-binding domain of UvrB"/>
    <property type="match status" value="1"/>
</dbReference>
<dbReference type="SUPFAM" id="SSF52540">
    <property type="entry name" value="P-loop containing nucleoside triphosphate hydrolases"/>
    <property type="match status" value="2"/>
</dbReference>
<dbReference type="PROSITE" id="PS51192">
    <property type="entry name" value="HELICASE_ATP_BIND_1"/>
    <property type="match status" value="1"/>
</dbReference>
<dbReference type="PROSITE" id="PS51194">
    <property type="entry name" value="HELICASE_CTER"/>
    <property type="match status" value="1"/>
</dbReference>
<dbReference type="PROSITE" id="PS50151">
    <property type="entry name" value="UVR"/>
    <property type="match status" value="1"/>
</dbReference>
<gene>
    <name evidence="1" type="primary">uvrB</name>
    <name type="ordered locus">Psyr_1974</name>
</gene>